<evidence type="ECO:0000255" key="1">
    <source>
        <dbReference type="HAMAP-Rule" id="MF_00176"/>
    </source>
</evidence>
<protein>
    <recommendedName>
        <fullName evidence="1">Serine--tRNA ligase</fullName>
        <ecNumber evidence="1">6.1.1.11</ecNumber>
    </recommendedName>
    <alternativeName>
        <fullName evidence="1">Seryl-tRNA synthetase</fullName>
        <shortName evidence="1">SerRS</shortName>
    </alternativeName>
    <alternativeName>
        <fullName evidence="1">Seryl-tRNA(Ser/Sec) synthetase</fullName>
    </alternativeName>
</protein>
<reference key="1">
    <citation type="submission" date="2003-06" db="EMBL/GenBank/DDBJ databases">
        <title>The complete genome sequence of Haemophilus ducreyi.</title>
        <authorList>
            <person name="Munson R.S. Jr."/>
            <person name="Ray W.C."/>
            <person name="Mahairas G."/>
            <person name="Sabo P."/>
            <person name="Mungur R."/>
            <person name="Johnson L."/>
            <person name="Nguyen D."/>
            <person name="Wang J."/>
            <person name="Forst C."/>
            <person name="Hood L."/>
        </authorList>
    </citation>
    <scope>NUCLEOTIDE SEQUENCE [LARGE SCALE GENOMIC DNA]</scope>
    <source>
        <strain>35000HP / ATCC 700724</strain>
    </source>
</reference>
<accession>Q7VM65</accession>
<dbReference type="EC" id="6.1.1.11" evidence="1"/>
<dbReference type="EMBL" id="AE017143">
    <property type="protein sequence ID" value="AAP95995.1"/>
    <property type="molecule type" value="Genomic_DNA"/>
</dbReference>
<dbReference type="RefSeq" id="WP_010945044.1">
    <property type="nucleotide sequence ID" value="NC_002940.2"/>
</dbReference>
<dbReference type="SMR" id="Q7VM65"/>
<dbReference type="STRING" id="233412.HD_1133"/>
<dbReference type="KEGG" id="hdu:HD_1133"/>
<dbReference type="eggNOG" id="COG0172">
    <property type="taxonomic scope" value="Bacteria"/>
</dbReference>
<dbReference type="HOGENOM" id="CLU_023797_1_1_6"/>
<dbReference type="OrthoDB" id="9804647at2"/>
<dbReference type="UniPathway" id="UPA00906">
    <property type="reaction ID" value="UER00895"/>
</dbReference>
<dbReference type="Proteomes" id="UP000001022">
    <property type="component" value="Chromosome"/>
</dbReference>
<dbReference type="GO" id="GO:0005737">
    <property type="term" value="C:cytoplasm"/>
    <property type="evidence" value="ECO:0007669"/>
    <property type="project" value="UniProtKB-SubCell"/>
</dbReference>
<dbReference type="GO" id="GO:0005524">
    <property type="term" value="F:ATP binding"/>
    <property type="evidence" value="ECO:0007669"/>
    <property type="project" value="UniProtKB-UniRule"/>
</dbReference>
<dbReference type="GO" id="GO:0004828">
    <property type="term" value="F:serine-tRNA ligase activity"/>
    <property type="evidence" value="ECO:0007669"/>
    <property type="project" value="UniProtKB-UniRule"/>
</dbReference>
<dbReference type="GO" id="GO:0016260">
    <property type="term" value="P:selenocysteine biosynthetic process"/>
    <property type="evidence" value="ECO:0007669"/>
    <property type="project" value="UniProtKB-UniRule"/>
</dbReference>
<dbReference type="GO" id="GO:0006434">
    <property type="term" value="P:seryl-tRNA aminoacylation"/>
    <property type="evidence" value="ECO:0007669"/>
    <property type="project" value="UniProtKB-UniRule"/>
</dbReference>
<dbReference type="CDD" id="cd00770">
    <property type="entry name" value="SerRS_core"/>
    <property type="match status" value="1"/>
</dbReference>
<dbReference type="Gene3D" id="3.30.930.10">
    <property type="entry name" value="Bira Bifunctional Protein, Domain 2"/>
    <property type="match status" value="1"/>
</dbReference>
<dbReference type="Gene3D" id="1.10.287.40">
    <property type="entry name" value="Serine-tRNA synthetase, tRNA binding domain"/>
    <property type="match status" value="1"/>
</dbReference>
<dbReference type="HAMAP" id="MF_00176">
    <property type="entry name" value="Ser_tRNA_synth_type1"/>
    <property type="match status" value="1"/>
</dbReference>
<dbReference type="InterPro" id="IPR002314">
    <property type="entry name" value="aa-tRNA-synt_IIb"/>
</dbReference>
<dbReference type="InterPro" id="IPR006195">
    <property type="entry name" value="aa-tRNA-synth_II"/>
</dbReference>
<dbReference type="InterPro" id="IPR045864">
    <property type="entry name" value="aa-tRNA-synth_II/BPL/LPL"/>
</dbReference>
<dbReference type="InterPro" id="IPR002317">
    <property type="entry name" value="Ser-tRNA-ligase_type_1"/>
</dbReference>
<dbReference type="InterPro" id="IPR015866">
    <property type="entry name" value="Ser-tRNA-synth_1_N"/>
</dbReference>
<dbReference type="InterPro" id="IPR042103">
    <property type="entry name" value="SerRS_1_N_sf"/>
</dbReference>
<dbReference type="InterPro" id="IPR033729">
    <property type="entry name" value="SerRS_core"/>
</dbReference>
<dbReference type="InterPro" id="IPR010978">
    <property type="entry name" value="tRNA-bd_arm"/>
</dbReference>
<dbReference type="NCBIfam" id="TIGR00414">
    <property type="entry name" value="serS"/>
    <property type="match status" value="1"/>
</dbReference>
<dbReference type="PANTHER" id="PTHR43697:SF1">
    <property type="entry name" value="SERINE--TRNA LIGASE"/>
    <property type="match status" value="1"/>
</dbReference>
<dbReference type="PANTHER" id="PTHR43697">
    <property type="entry name" value="SERYL-TRNA SYNTHETASE"/>
    <property type="match status" value="1"/>
</dbReference>
<dbReference type="Pfam" id="PF02403">
    <property type="entry name" value="Seryl_tRNA_N"/>
    <property type="match status" value="1"/>
</dbReference>
<dbReference type="Pfam" id="PF00587">
    <property type="entry name" value="tRNA-synt_2b"/>
    <property type="match status" value="1"/>
</dbReference>
<dbReference type="PIRSF" id="PIRSF001529">
    <property type="entry name" value="Ser-tRNA-synth_IIa"/>
    <property type="match status" value="1"/>
</dbReference>
<dbReference type="PRINTS" id="PR00981">
    <property type="entry name" value="TRNASYNTHSER"/>
</dbReference>
<dbReference type="SUPFAM" id="SSF55681">
    <property type="entry name" value="Class II aaRS and biotin synthetases"/>
    <property type="match status" value="1"/>
</dbReference>
<dbReference type="SUPFAM" id="SSF46589">
    <property type="entry name" value="tRNA-binding arm"/>
    <property type="match status" value="1"/>
</dbReference>
<dbReference type="PROSITE" id="PS50862">
    <property type="entry name" value="AA_TRNA_LIGASE_II"/>
    <property type="match status" value="1"/>
</dbReference>
<name>SYS_HAEDU</name>
<organism>
    <name type="scientific">Haemophilus ducreyi (strain 35000HP / ATCC 700724)</name>
    <dbReference type="NCBI Taxonomy" id="233412"/>
    <lineage>
        <taxon>Bacteria</taxon>
        <taxon>Pseudomonadati</taxon>
        <taxon>Pseudomonadota</taxon>
        <taxon>Gammaproteobacteria</taxon>
        <taxon>Pasteurellales</taxon>
        <taxon>Pasteurellaceae</taxon>
        <taxon>Haemophilus</taxon>
    </lineage>
</organism>
<comment type="function">
    <text evidence="1">Catalyzes the attachment of serine to tRNA(Ser). Is also able to aminoacylate tRNA(Sec) with serine, to form the misacylated tRNA L-seryl-tRNA(Sec), which will be further converted into selenocysteinyl-tRNA(Sec).</text>
</comment>
<comment type="catalytic activity">
    <reaction evidence="1">
        <text>tRNA(Ser) + L-serine + ATP = L-seryl-tRNA(Ser) + AMP + diphosphate + H(+)</text>
        <dbReference type="Rhea" id="RHEA:12292"/>
        <dbReference type="Rhea" id="RHEA-COMP:9669"/>
        <dbReference type="Rhea" id="RHEA-COMP:9703"/>
        <dbReference type="ChEBI" id="CHEBI:15378"/>
        <dbReference type="ChEBI" id="CHEBI:30616"/>
        <dbReference type="ChEBI" id="CHEBI:33019"/>
        <dbReference type="ChEBI" id="CHEBI:33384"/>
        <dbReference type="ChEBI" id="CHEBI:78442"/>
        <dbReference type="ChEBI" id="CHEBI:78533"/>
        <dbReference type="ChEBI" id="CHEBI:456215"/>
        <dbReference type="EC" id="6.1.1.11"/>
    </reaction>
</comment>
<comment type="catalytic activity">
    <reaction evidence="1">
        <text>tRNA(Sec) + L-serine + ATP = L-seryl-tRNA(Sec) + AMP + diphosphate + H(+)</text>
        <dbReference type="Rhea" id="RHEA:42580"/>
        <dbReference type="Rhea" id="RHEA-COMP:9742"/>
        <dbReference type="Rhea" id="RHEA-COMP:10128"/>
        <dbReference type="ChEBI" id="CHEBI:15378"/>
        <dbReference type="ChEBI" id="CHEBI:30616"/>
        <dbReference type="ChEBI" id="CHEBI:33019"/>
        <dbReference type="ChEBI" id="CHEBI:33384"/>
        <dbReference type="ChEBI" id="CHEBI:78442"/>
        <dbReference type="ChEBI" id="CHEBI:78533"/>
        <dbReference type="ChEBI" id="CHEBI:456215"/>
        <dbReference type="EC" id="6.1.1.11"/>
    </reaction>
</comment>
<comment type="pathway">
    <text evidence="1">Aminoacyl-tRNA biosynthesis; selenocysteinyl-tRNA(Sec) biosynthesis; L-seryl-tRNA(Sec) from L-serine and tRNA(Sec): step 1/1.</text>
</comment>
<comment type="subunit">
    <text evidence="1">Homodimer. The tRNA molecule binds across the dimer.</text>
</comment>
<comment type="subcellular location">
    <subcellularLocation>
        <location evidence="1">Cytoplasm</location>
    </subcellularLocation>
</comment>
<comment type="domain">
    <text evidence="1">Consists of two distinct domains, a catalytic core and a N-terminal extension that is involved in tRNA binding.</text>
</comment>
<comment type="similarity">
    <text evidence="1">Belongs to the class-II aminoacyl-tRNA synthetase family. Type-1 seryl-tRNA synthetase subfamily.</text>
</comment>
<proteinExistence type="inferred from homology"/>
<feature type="chain" id="PRO_0000122056" description="Serine--tRNA ligase">
    <location>
        <begin position="1"/>
        <end position="435"/>
    </location>
</feature>
<feature type="binding site" evidence="1">
    <location>
        <begin position="241"/>
        <end position="243"/>
    </location>
    <ligand>
        <name>L-serine</name>
        <dbReference type="ChEBI" id="CHEBI:33384"/>
    </ligand>
</feature>
<feature type="binding site" evidence="1">
    <location>
        <begin position="272"/>
        <end position="274"/>
    </location>
    <ligand>
        <name>ATP</name>
        <dbReference type="ChEBI" id="CHEBI:30616"/>
    </ligand>
</feature>
<feature type="binding site" evidence="1">
    <location>
        <position position="295"/>
    </location>
    <ligand>
        <name>L-serine</name>
        <dbReference type="ChEBI" id="CHEBI:33384"/>
    </ligand>
</feature>
<feature type="binding site" evidence="1">
    <location>
        <begin position="359"/>
        <end position="362"/>
    </location>
    <ligand>
        <name>ATP</name>
        <dbReference type="ChEBI" id="CHEBI:30616"/>
    </ligand>
</feature>
<feature type="binding site" evidence="1">
    <location>
        <position position="395"/>
    </location>
    <ligand>
        <name>L-serine</name>
        <dbReference type="ChEBI" id="CHEBI:33384"/>
    </ligand>
</feature>
<gene>
    <name evidence="1" type="primary">serS</name>
    <name type="ordered locus">HD_1133</name>
</gene>
<keyword id="KW-0030">Aminoacyl-tRNA synthetase</keyword>
<keyword id="KW-0067">ATP-binding</keyword>
<keyword id="KW-0963">Cytoplasm</keyword>
<keyword id="KW-0436">Ligase</keyword>
<keyword id="KW-0547">Nucleotide-binding</keyword>
<keyword id="KW-0648">Protein biosynthesis</keyword>
<keyword id="KW-1185">Reference proteome</keyword>
<sequence length="435" mass="48817">MIDQNLLRTNLDDVANALKLKRNFILDVNQVKALEEQRKTLQVTTETLQAERNARSKNIGAAKARGENISQLLAEVDTMGNQLEIAKTELDKVQSEIRELLLTIPNLPAEEVPLGKDDSQNKEILRWGTPRQFDFEIKDHVTLGENLKGIDFPTGVKLTASRFVVMKDKIARLHRALAQFMLDLHSEQHGYMEVNVPLLVNHDTLYGTGQLPKFGEDLFHTQPLTGQDPNEVQRPYGLIPTAEVPLTNLVRDEIVDEDSLPIKLVAHTPCFRAEAGSYGRDTRGLIRMHQFEKVELVQIVAPEKSMEALEELTGQAEKILQLLHLPYRKVLLCTGDMGFGSAKTYDLEVWLPAQNTYREISSCSNMWDFQARRMSARCKAKGDKKTRLVHTLNGSGLAVGRTLVAVLENYQNADGSITIPEVLRPYMAGQEAITG</sequence>